<name>CH601_ANADF</name>
<dbReference type="EC" id="5.6.1.7" evidence="1"/>
<dbReference type="EMBL" id="CP000769">
    <property type="protein sequence ID" value="ABS25679.1"/>
    <property type="molecule type" value="Genomic_DNA"/>
</dbReference>
<dbReference type="RefSeq" id="WP_011985785.1">
    <property type="nucleotide sequence ID" value="NC_009675.1"/>
</dbReference>
<dbReference type="SMR" id="A7HAD3"/>
<dbReference type="STRING" id="404589.Anae109_1472"/>
<dbReference type="KEGG" id="afw:Anae109_1472"/>
<dbReference type="eggNOG" id="COG0459">
    <property type="taxonomic scope" value="Bacteria"/>
</dbReference>
<dbReference type="HOGENOM" id="CLU_016503_3_0_7"/>
<dbReference type="OrthoDB" id="9766614at2"/>
<dbReference type="Proteomes" id="UP000006382">
    <property type="component" value="Chromosome"/>
</dbReference>
<dbReference type="GO" id="GO:0005737">
    <property type="term" value="C:cytoplasm"/>
    <property type="evidence" value="ECO:0007669"/>
    <property type="project" value="UniProtKB-SubCell"/>
</dbReference>
<dbReference type="GO" id="GO:0005524">
    <property type="term" value="F:ATP binding"/>
    <property type="evidence" value="ECO:0007669"/>
    <property type="project" value="UniProtKB-UniRule"/>
</dbReference>
<dbReference type="GO" id="GO:0140662">
    <property type="term" value="F:ATP-dependent protein folding chaperone"/>
    <property type="evidence" value="ECO:0007669"/>
    <property type="project" value="InterPro"/>
</dbReference>
<dbReference type="GO" id="GO:0016853">
    <property type="term" value="F:isomerase activity"/>
    <property type="evidence" value="ECO:0007669"/>
    <property type="project" value="UniProtKB-KW"/>
</dbReference>
<dbReference type="GO" id="GO:0051082">
    <property type="term" value="F:unfolded protein binding"/>
    <property type="evidence" value="ECO:0007669"/>
    <property type="project" value="UniProtKB-UniRule"/>
</dbReference>
<dbReference type="GO" id="GO:0042026">
    <property type="term" value="P:protein refolding"/>
    <property type="evidence" value="ECO:0007669"/>
    <property type="project" value="UniProtKB-UniRule"/>
</dbReference>
<dbReference type="CDD" id="cd03344">
    <property type="entry name" value="GroEL"/>
    <property type="match status" value="1"/>
</dbReference>
<dbReference type="FunFam" id="1.10.560.10:FF:000001">
    <property type="entry name" value="60 kDa chaperonin"/>
    <property type="match status" value="1"/>
</dbReference>
<dbReference type="FunFam" id="3.50.7.10:FF:000001">
    <property type="entry name" value="60 kDa chaperonin"/>
    <property type="match status" value="1"/>
</dbReference>
<dbReference type="Gene3D" id="3.50.7.10">
    <property type="entry name" value="GroEL"/>
    <property type="match status" value="1"/>
</dbReference>
<dbReference type="Gene3D" id="1.10.560.10">
    <property type="entry name" value="GroEL-like equatorial domain"/>
    <property type="match status" value="1"/>
</dbReference>
<dbReference type="Gene3D" id="3.30.260.10">
    <property type="entry name" value="TCP-1-like chaperonin intermediate domain"/>
    <property type="match status" value="1"/>
</dbReference>
<dbReference type="HAMAP" id="MF_00600">
    <property type="entry name" value="CH60"/>
    <property type="match status" value="1"/>
</dbReference>
<dbReference type="InterPro" id="IPR018370">
    <property type="entry name" value="Chaperonin_Cpn60_CS"/>
</dbReference>
<dbReference type="InterPro" id="IPR001844">
    <property type="entry name" value="Cpn60/GroEL"/>
</dbReference>
<dbReference type="InterPro" id="IPR002423">
    <property type="entry name" value="Cpn60/GroEL/TCP-1"/>
</dbReference>
<dbReference type="InterPro" id="IPR027409">
    <property type="entry name" value="GroEL-like_apical_dom_sf"/>
</dbReference>
<dbReference type="InterPro" id="IPR027413">
    <property type="entry name" value="GROEL-like_equatorial_sf"/>
</dbReference>
<dbReference type="InterPro" id="IPR027410">
    <property type="entry name" value="TCP-1-like_intermed_sf"/>
</dbReference>
<dbReference type="NCBIfam" id="TIGR02348">
    <property type="entry name" value="GroEL"/>
    <property type="match status" value="1"/>
</dbReference>
<dbReference type="NCBIfam" id="NF000592">
    <property type="entry name" value="PRK00013.1"/>
    <property type="match status" value="1"/>
</dbReference>
<dbReference type="NCBIfam" id="NF009487">
    <property type="entry name" value="PRK12849.1"/>
    <property type="match status" value="1"/>
</dbReference>
<dbReference type="NCBIfam" id="NF009488">
    <property type="entry name" value="PRK12850.1"/>
    <property type="match status" value="1"/>
</dbReference>
<dbReference type="NCBIfam" id="NF009489">
    <property type="entry name" value="PRK12851.1"/>
    <property type="match status" value="1"/>
</dbReference>
<dbReference type="PANTHER" id="PTHR45633">
    <property type="entry name" value="60 KDA HEAT SHOCK PROTEIN, MITOCHONDRIAL"/>
    <property type="match status" value="1"/>
</dbReference>
<dbReference type="Pfam" id="PF00118">
    <property type="entry name" value="Cpn60_TCP1"/>
    <property type="match status" value="1"/>
</dbReference>
<dbReference type="PRINTS" id="PR00298">
    <property type="entry name" value="CHAPERONIN60"/>
</dbReference>
<dbReference type="SUPFAM" id="SSF52029">
    <property type="entry name" value="GroEL apical domain-like"/>
    <property type="match status" value="1"/>
</dbReference>
<dbReference type="SUPFAM" id="SSF48592">
    <property type="entry name" value="GroEL equatorial domain-like"/>
    <property type="match status" value="1"/>
</dbReference>
<dbReference type="SUPFAM" id="SSF54849">
    <property type="entry name" value="GroEL-intermediate domain like"/>
    <property type="match status" value="1"/>
</dbReference>
<dbReference type="PROSITE" id="PS00296">
    <property type="entry name" value="CHAPERONINS_CPN60"/>
    <property type="match status" value="1"/>
</dbReference>
<sequence length="547" mass="58367">MPAKEIAFHQGAREAILRGVQTLAEAVAVTLGPKGRNVVIEKSFGSPTITKDGVTVAKEIEVENKFENMGAQMVREVASQTSDKAGDGTTTATVLARALFEEGLKLVAAGHNPMDLKRGIDRAVEVIVAELKKLSKPTQGKKDIAQVGTISANGDETIGNIIAEAMEKVGKEGVITVEEAKGLETTLDVVEGMQFDRGYSSPYFVTNPDRMEAVLEDPFILITEKKISAMADLIPVLEQVARSGKPLLIVAEDVEGEALATLVVNKLRGTLHVCAVKAPGFGDRRKEMLKDIATLTGGNVVAEELGIKLEQLTVKDLGRAKRITIDKENTTIVDGEGKREDIEARIKQIRAQIEETTSDYDREKLQERLAKLVGGVAVINVGAATETEMKEKKARVEDALHATRAAVEEGIVPGGGVAYLRALQALKKLEVPEGDQRFGVAIVQKALEYPARRIAENAGWDGAVVVSRINDGKAAHGFNAASEVFEDLEKAGVIDPTKVSRTALQNAASVASLLLTTEAMVAEKPKKKGAPAGGGMGGMGGMDEMDY</sequence>
<protein>
    <recommendedName>
        <fullName evidence="1">Chaperonin GroEL 1</fullName>
        <ecNumber evidence="1">5.6.1.7</ecNumber>
    </recommendedName>
    <alternativeName>
        <fullName evidence="1">60 kDa chaperonin 1</fullName>
    </alternativeName>
    <alternativeName>
        <fullName evidence="1">Chaperonin-60 1</fullName>
        <shortName evidence="1">Cpn60 1</shortName>
    </alternativeName>
</protein>
<accession>A7HAD3</accession>
<organism>
    <name type="scientific">Anaeromyxobacter sp. (strain Fw109-5)</name>
    <dbReference type="NCBI Taxonomy" id="404589"/>
    <lineage>
        <taxon>Bacteria</taxon>
        <taxon>Pseudomonadati</taxon>
        <taxon>Myxococcota</taxon>
        <taxon>Myxococcia</taxon>
        <taxon>Myxococcales</taxon>
        <taxon>Cystobacterineae</taxon>
        <taxon>Anaeromyxobacteraceae</taxon>
        <taxon>Anaeromyxobacter</taxon>
    </lineage>
</organism>
<evidence type="ECO:0000255" key="1">
    <source>
        <dbReference type="HAMAP-Rule" id="MF_00600"/>
    </source>
</evidence>
<evidence type="ECO:0000256" key="2">
    <source>
        <dbReference type="SAM" id="MobiDB-lite"/>
    </source>
</evidence>
<feature type="chain" id="PRO_0000331964" description="Chaperonin GroEL 1">
    <location>
        <begin position="1"/>
        <end position="547"/>
    </location>
</feature>
<feature type="region of interest" description="Disordered" evidence="2">
    <location>
        <begin position="525"/>
        <end position="547"/>
    </location>
</feature>
<feature type="compositionally biased region" description="Gly residues" evidence="2">
    <location>
        <begin position="531"/>
        <end position="541"/>
    </location>
</feature>
<feature type="binding site" evidence="1">
    <location>
        <begin position="30"/>
        <end position="33"/>
    </location>
    <ligand>
        <name>ATP</name>
        <dbReference type="ChEBI" id="CHEBI:30616"/>
    </ligand>
</feature>
<feature type="binding site" evidence="1">
    <location>
        <position position="51"/>
    </location>
    <ligand>
        <name>ATP</name>
        <dbReference type="ChEBI" id="CHEBI:30616"/>
    </ligand>
</feature>
<feature type="binding site" evidence="1">
    <location>
        <begin position="87"/>
        <end position="91"/>
    </location>
    <ligand>
        <name>ATP</name>
        <dbReference type="ChEBI" id="CHEBI:30616"/>
    </ligand>
</feature>
<feature type="binding site" evidence="1">
    <location>
        <position position="415"/>
    </location>
    <ligand>
        <name>ATP</name>
        <dbReference type="ChEBI" id="CHEBI:30616"/>
    </ligand>
</feature>
<feature type="binding site" evidence="1">
    <location>
        <begin position="479"/>
        <end position="481"/>
    </location>
    <ligand>
        <name>ATP</name>
        <dbReference type="ChEBI" id="CHEBI:30616"/>
    </ligand>
</feature>
<feature type="binding site" evidence="1">
    <location>
        <position position="495"/>
    </location>
    <ligand>
        <name>ATP</name>
        <dbReference type="ChEBI" id="CHEBI:30616"/>
    </ligand>
</feature>
<proteinExistence type="inferred from homology"/>
<comment type="function">
    <text evidence="1">Together with its co-chaperonin GroES, plays an essential role in assisting protein folding. The GroEL-GroES system forms a nano-cage that allows encapsulation of the non-native substrate proteins and provides a physical environment optimized to promote and accelerate protein folding.</text>
</comment>
<comment type="catalytic activity">
    <reaction evidence="1">
        <text>ATP + H2O + a folded polypeptide = ADP + phosphate + an unfolded polypeptide.</text>
        <dbReference type="EC" id="5.6.1.7"/>
    </reaction>
</comment>
<comment type="subunit">
    <text evidence="1">Forms a cylinder of 14 subunits composed of two heptameric rings stacked back-to-back. Interacts with the co-chaperonin GroES.</text>
</comment>
<comment type="subcellular location">
    <subcellularLocation>
        <location evidence="1">Cytoplasm</location>
    </subcellularLocation>
</comment>
<comment type="similarity">
    <text evidence="1">Belongs to the chaperonin (HSP60) family.</text>
</comment>
<reference key="1">
    <citation type="journal article" date="2015" name="Genome Announc.">
        <title>Complete genome sequence of Anaeromyxobacter sp. Fw109-5, an anaerobic, metal-reducing bacterium isolated from a contaminated subsurface environment.</title>
        <authorList>
            <person name="Hwang C."/>
            <person name="Copeland A."/>
            <person name="Lucas S."/>
            <person name="Lapidus A."/>
            <person name="Barry K."/>
            <person name="Glavina Del Rio T."/>
            <person name="Dalin E."/>
            <person name="Tice H."/>
            <person name="Pitluck S."/>
            <person name="Sims D."/>
            <person name="Brettin T."/>
            <person name="Bruce D.C."/>
            <person name="Detter J.C."/>
            <person name="Han C.S."/>
            <person name="Schmutz J."/>
            <person name="Larimer F.W."/>
            <person name="Land M.L."/>
            <person name="Hauser L.J."/>
            <person name="Kyrpides N."/>
            <person name="Lykidis A."/>
            <person name="Richardson P."/>
            <person name="Belieav A."/>
            <person name="Sanford R.A."/>
            <person name="Loeffler F.E."/>
            <person name="Fields M.W."/>
        </authorList>
    </citation>
    <scope>NUCLEOTIDE SEQUENCE [LARGE SCALE GENOMIC DNA]</scope>
    <source>
        <strain>Fw109-5</strain>
    </source>
</reference>
<gene>
    <name evidence="1" type="primary">groEL1</name>
    <name evidence="1" type="synonym">groL1</name>
    <name type="ordered locus">Anae109_1472</name>
</gene>
<keyword id="KW-0067">ATP-binding</keyword>
<keyword id="KW-0143">Chaperone</keyword>
<keyword id="KW-0963">Cytoplasm</keyword>
<keyword id="KW-0413">Isomerase</keyword>
<keyword id="KW-0547">Nucleotide-binding</keyword>
<keyword id="KW-1185">Reference proteome</keyword>